<reference key="1">
    <citation type="journal article" date="2007" name="PLoS ONE">
        <title>Molecular correlates of host specialization in Staphylococcus aureus.</title>
        <authorList>
            <person name="Herron-Olson L."/>
            <person name="Fitzgerald J.R."/>
            <person name="Musser J.M."/>
            <person name="Kapur V."/>
        </authorList>
    </citation>
    <scope>NUCLEOTIDE SEQUENCE [LARGE SCALE GENOMIC DNA]</scope>
    <source>
        <strain>bovine RF122 / ET3-1</strain>
    </source>
</reference>
<gene>
    <name evidence="1" type="primary">sucC</name>
    <name type="ordered locus">SAB1109</name>
</gene>
<proteinExistence type="inferred from homology"/>
<dbReference type="EC" id="6.2.1.5" evidence="1"/>
<dbReference type="EMBL" id="AJ938182">
    <property type="protein sequence ID" value="CAI80798.1"/>
    <property type="molecule type" value="Genomic_DNA"/>
</dbReference>
<dbReference type="RefSeq" id="WP_001020798.1">
    <property type="nucleotide sequence ID" value="NC_007622.1"/>
</dbReference>
<dbReference type="SMR" id="Q2YXM1"/>
<dbReference type="KEGG" id="sab:SAB1109"/>
<dbReference type="HOGENOM" id="CLU_037430_0_2_9"/>
<dbReference type="UniPathway" id="UPA00223">
    <property type="reaction ID" value="UER00999"/>
</dbReference>
<dbReference type="GO" id="GO:0005829">
    <property type="term" value="C:cytosol"/>
    <property type="evidence" value="ECO:0007669"/>
    <property type="project" value="TreeGrafter"/>
</dbReference>
<dbReference type="GO" id="GO:0042709">
    <property type="term" value="C:succinate-CoA ligase complex"/>
    <property type="evidence" value="ECO:0007669"/>
    <property type="project" value="TreeGrafter"/>
</dbReference>
<dbReference type="GO" id="GO:0005524">
    <property type="term" value="F:ATP binding"/>
    <property type="evidence" value="ECO:0007669"/>
    <property type="project" value="UniProtKB-UniRule"/>
</dbReference>
<dbReference type="GO" id="GO:0000287">
    <property type="term" value="F:magnesium ion binding"/>
    <property type="evidence" value="ECO:0007669"/>
    <property type="project" value="UniProtKB-UniRule"/>
</dbReference>
<dbReference type="GO" id="GO:0004775">
    <property type="term" value="F:succinate-CoA ligase (ADP-forming) activity"/>
    <property type="evidence" value="ECO:0007669"/>
    <property type="project" value="UniProtKB-UniRule"/>
</dbReference>
<dbReference type="GO" id="GO:0004776">
    <property type="term" value="F:succinate-CoA ligase (GDP-forming) activity"/>
    <property type="evidence" value="ECO:0007669"/>
    <property type="project" value="RHEA"/>
</dbReference>
<dbReference type="GO" id="GO:0006104">
    <property type="term" value="P:succinyl-CoA metabolic process"/>
    <property type="evidence" value="ECO:0007669"/>
    <property type="project" value="TreeGrafter"/>
</dbReference>
<dbReference type="GO" id="GO:0006099">
    <property type="term" value="P:tricarboxylic acid cycle"/>
    <property type="evidence" value="ECO:0007669"/>
    <property type="project" value="UniProtKB-UniRule"/>
</dbReference>
<dbReference type="FunFam" id="3.30.1490.20:FF:000002">
    <property type="entry name" value="Succinate--CoA ligase [ADP-forming] subunit beta"/>
    <property type="match status" value="1"/>
</dbReference>
<dbReference type="FunFam" id="3.30.470.20:FF:000002">
    <property type="entry name" value="Succinate--CoA ligase [ADP-forming] subunit beta"/>
    <property type="match status" value="1"/>
</dbReference>
<dbReference type="FunFam" id="3.40.50.261:FF:000001">
    <property type="entry name" value="Succinate--CoA ligase [ADP-forming] subunit beta"/>
    <property type="match status" value="1"/>
</dbReference>
<dbReference type="Gene3D" id="3.30.1490.20">
    <property type="entry name" value="ATP-grasp fold, A domain"/>
    <property type="match status" value="1"/>
</dbReference>
<dbReference type="Gene3D" id="3.30.470.20">
    <property type="entry name" value="ATP-grasp fold, B domain"/>
    <property type="match status" value="1"/>
</dbReference>
<dbReference type="Gene3D" id="3.40.50.261">
    <property type="entry name" value="Succinyl-CoA synthetase domains"/>
    <property type="match status" value="1"/>
</dbReference>
<dbReference type="HAMAP" id="MF_00558">
    <property type="entry name" value="Succ_CoA_beta"/>
    <property type="match status" value="1"/>
</dbReference>
<dbReference type="InterPro" id="IPR011761">
    <property type="entry name" value="ATP-grasp"/>
</dbReference>
<dbReference type="InterPro" id="IPR013650">
    <property type="entry name" value="ATP-grasp_succ-CoA_synth-type"/>
</dbReference>
<dbReference type="InterPro" id="IPR013815">
    <property type="entry name" value="ATP_grasp_subdomain_1"/>
</dbReference>
<dbReference type="InterPro" id="IPR017866">
    <property type="entry name" value="Succ-CoA_synthase_bsu_CS"/>
</dbReference>
<dbReference type="InterPro" id="IPR005811">
    <property type="entry name" value="SUCC_ACL_C"/>
</dbReference>
<dbReference type="InterPro" id="IPR005809">
    <property type="entry name" value="Succ_CoA_ligase-like_bsu"/>
</dbReference>
<dbReference type="InterPro" id="IPR016102">
    <property type="entry name" value="Succinyl-CoA_synth-like"/>
</dbReference>
<dbReference type="NCBIfam" id="NF001913">
    <property type="entry name" value="PRK00696.1"/>
    <property type="match status" value="1"/>
</dbReference>
<dbReference type="NCBIfam" id="TIGR01016">
    <property type="entry name" value="sucCoAbeta"/>
    <property type="match status" value="1"/>
</dbReference>
<dbReference type="PANTHER" id="PTHR11815:SF10">
    <property type="entry name" value="SUCCINATE--COA LIGASE [GDP-FORMING] SUBUNIT BETA, MITOCHONDRIAL"/>
    <property type="match status" value="1"/>
</dbReference>
<dbReference type="PANTHER" id="PTHR11815">
    <property type="entry name" value="SUCCINYL-COA SYNTHETASE BETA CHAIN"/>
    <property type="match status" value="1"/>
</dbReference>
<dbReference type="Pfam" id="PF08442">
    <property type="entry name" value="ATP-grasp_2"/>
    <property type="match status" value="1"/>
</dbReference>
<dbReference type="Pfam" id="PF00549">
    <property type="entry name" value="Ligase_CoA"/>
    <property type="match status" value="1"/>
</dbReference>
<dbReference type="PIRSF" id="PIRSF001554">
    <property type="entry name" value="SucCS_beta"/>
    <property type="match status" value="1"/>
</dbReference>
<dbReference type="SUPFAM" id="SSF56059">
    <property type="entry name" value="Glutathione synthetase ATP-binding domain-like"/>
    <property type="match status" value="1"/>
</dbReference>
<dbReference type="SUPFAM" id="SSF52210">
    <property type="entry name" value="Succinyl-CoA synthetase domains"/>
    <property type="match status" value="1"/>
</dbReference>
<dbReference type="PROSITE" id="PS50975">
    <property type="entry name" value="ATP_GRASP"/>
    <property type="match status" value="1"/>
</dbReference>
<dbReference type="PROSITE" id="PS01217">
    <property type="entry name" value="SUCCINYL_COA_LIG_3"/>
    <property type="match status" value="1"/>
</dbReference>
<comment type="function">
    <text evidence="1">Succinyl-CoA synthetase functions in the citric acid cycle (TCA), coupling the hydrolysis of succinyl-CoA to the synthesis of either ATP or GTP and thus represents the only step of substrate-level phosphorylation in the TCA. The beta subunit provides nucleotide specificity of the enzyme and binds the substrate succinate, while the binding sites for coenzyme A and phosphate are found in the alpha subunit.</text>
</comment>
<comment type="catalytic activity">
    <reaction evidence="1">
        <text>succinate + ATP + CoA = succinyl-CoA + ADP + phosphate</text>
        <dbReference type="Rhea" id="RHEA:17661"/>
        <dbReference type="ChEBI" id="CHEBI:30031"/>
        <dbReference type="ChEBI" id="CHEBI:30616"/>
        <dbReference type="ChEBI" id="CHEBI:43474"/>
        <dbReference type="ChEBI" id="CHEBI:57287"/>
        <dbReference type="ChEBI" id="CHEBI:57292"/>
        <dbReference type="ChEBI" id="CHEBI:456216"/>
        <dbReference type="EC" id="6.2.1.5"/>
    </reaction>
    <physiologicalReaction direction="right-to-left" evidence="1">
        <dbReference type="Rhea" id="RHEA:17663"/>
    </physiologicalReaction>
</comment>
<comment type="catalytic activity">
    <reaction evidence="1">
        <text>GTP + succinate + CoA = succinyl-CoA + GDP + phosphate</text>
        <dbReference type="Rhea" id="RHEA:22120"/>
        <dbReference type="ChEBI" id="CHEBI:30031"/>
        <dbReference type="ChEBI" id="CHEBI:37565"/>
        <dbReference type="ChEBI" id="CHEBI:43474"/>
        <dbReference type="ChEBI" id="CHEBI:57287"/>
        <dbReference type="ChEBI" id="CHEBI:57292"/>
        <dbReference type="ChEBI" id="CHEBI:58189"/>
    </reaction>
    <physiologicalReaction direction="right-to-left" evidence="1">
        <dbReference type="Rhea" id="RHEA:22122"/>
    </physiologicalReaction>
</comment>
<comment type="cofactor">
    <cofactor evidence="1">
        <name>Mg(2+)</name>
        <dbReference type="ChEBI" id="CHEBI:18420"/>
    </cofactor>
    <text evidence="1">Binds 1 Mg(2+) ion per subunit.</text>
</comment>
<comment type="pathway">
    <text evidence="1">Carbohydrate metabolism; tricarboxylic acid cycle; succinate from succinyl-CoA (ligase route): step 1/1.</text>
</comment>
<comment type="subunit">
    <text evidence="1">Heterotetramer of two alpha and two beta subunits.</text>
</comment>
<comment type="similarity">
    <text evidence="1">Belongs to the succinate/malate CoA ligase beta subunit family.</text>
</comment>
<feature type="chain" id="PRO_1000082246" description="Succinate--CoA ligase [ADP-forming] subunit beta">
    <location>
        <begin position="1"/>
        <end position="388"/>
    </location>
</feature>
<feature type="domain" description="ATP-grasp" evidence="1">
    <location>
        <begin position="9"/>
        <end position="244"/>
    </location>
</feature>
<feature type="binding site" evidence="1">
    <location>
        <position position="46"/>
    </location>
    <ligand>
        <name>ATP</name>
        <dbReference type="ChEBI" id="CHEBI:30616"/>
    </ligand>
</feature>
<feature type="binding site" evidence="1">
    <location>
        <begin position="53"/>
        <end position="55"/>
    </location>
    <ligand>
        <name>ATP</name>
        <dbReference type="ChEBI" id="CHEBI:30616"/>
    </ligand>
</feature>
<feature type="binding site" evidence="1">
    <location>
        <position position="99"/>
    </location>
    <ligand>
        <name>ATP</name>
        <dbReference type="ChEBI" id="CHEBI:30616"/>
    </ligand>
</feature>
<feature type="binding site" evidence="1">
    <location>
        <position position="102"/>
    </location>
    <ligand>
        <name>ATP</name>
        <dbReference type="ChEBI" id="CHEBI:30616"/>
    </ligand>
</feature>
<feature type="binding site" evidence="1">
    <location>
        <position position="107"/>
    </location>
    <ligand>
        <name>ATP</name>
        <dbReference type="ChEBI" id="CHEBI:30616"/>
    </ligand>
</feature>
<feature type="binding site" evidence="1">
    <location>
        <position position="199"/>
    </location>
    <ligand>
        <name>Mg(2+)</name>
        <dbReference type="ChEBI" id="CHEBI:18420"/>
    </ligand>
</feature>
<feature type="binding site" evidence="1">
    <location>
        <position position="213"/>
    </location>
    <ligand>
        <name>Mg(2+)</name>
        <dbReference type="ChEBI" id="CHEBI:18420"/>
    </ligand>
</feature>
<feature type="binding site" evidence="1">
    <location>
        <position position="264"/>
    </location>
    <ligand>
        <name>substrate</name>
        <note>ligand shared with subunit alpha</note>
    </ligand>
</feature>
<feature type="binding site" evidence="1">
    <location>
        <begin position="321"/>
        <end position="323"/>
    </location>
    <ligand>
        <name>substrate</name>
        <note>ligand shared with subunit alpha</note>
    </ligand>
</feature>
<sequence length="388" mass="42118">MNIHEYQGKEIFRSMGVAVPEGRVAFTAEEAVEKAKEFNSDVYVVKAQIHAGGRGKAGGVKIAKSLSEVETYAKELLGKTLVTHQTGPEGKEIKRLYIEEGCAIQKEYYVGFVIDRATDQVTLMASEEGGTEIEEVAAKTPEKIFKETIDPVIGLSPFQARRIAFNINIPKESVNKAAKFLLALYNVFIEKDCSIVEINPLVTTADGDVLVLDAKINFDDNALFRHKDVVELRDLEEEDPKEIEASKHDLSYIALDGDIGCMVNGAGLAMATMDTINHFGGNPANFLDAGGSATREKVTEAFKIILGDENVKGIFVNIFGGIMKCDVIAEGIVEAVKEVDLTLPLVVRLEGTNVELGKKILKDSGLAIEPAATMAEGAQKIVKLVKEA</sequence>
<accession>Q2YXM1</accession>
<keyword id="KW-0067">ATP-binding</keyword>
<keyword id="KW-0436">Ligase</keyword>
<keyword id="KW-0460">Magnesium</keyword>
<keyword id="KW-0479">Metal-binding</keyword>
<keyword id="KW-0547">Nucleotide-binding</keyword>
<keyword id="KW-0816">Tricarboxylic acid cycle</keyword>
<organism>
    <name type="scientific">Staphylococcus aureus (strain bovine RF122 / ET3-1)</name>
    <dbReference type="NCBI Taxonomy" id="273036"/>
    <lineage>
        <taxon>Bacteria</taxon>
        <taxon>Bacillati</taxon>
        <taxon>Bacillota</taxon>
        <taxon>Bacilli</taxon>
        <taxon>Bacillales</taxon>
        <taxon>Staphylococcaceae</taxon>
        <taxon>Staphylococcus</taxon>
    </lineage>
</organism>
<evidence type="ECO:0000255" key="1">
    <source>
        <dbReference type="HAMAP-Rule" id="MF_00558"/>
    </source>
</evidence>
<protein>
    <recommendedName>
        <fullName evidence="1">Succinate--CoA ligase [ADP-forming] subunit beta</fullName>
        <ecNumber evidence="1">6.2.1.5</ecNumber>
    </recommendedName>
    <alternativeName>
        <fullName evidence="1">Succinyl-CoA synthetase subunit beta</fullName>
        <shortName evidence="1">SCS-beta</shortName>
    </alternativeName>
</protein>
<name>SUCC_STAAB</name>